<organism>
    <name type="scientific">Danio rerio</name>
    <name type="common">Zebrafish</name>
    <name type="synonym">Brachydanio rerio</name>
    <dbReference type="NCBI Taxonomy" id="7955"/>
    <lineage>
        <taxon>Eukaryota</taxon>
        <taxon>Metazoa</taxon>
        <taxon>Chordata</taxon>
        <taxon>Craniata</taxon>
        <taxon>Vertebrata</taxon>
        <taxon>Euteleostomi</taxon>
        <taxon>Actinopterygii</taxon>
        <taxon>Neopterygii</taxon>
        <taxon>Teleostei</taxon>
        <taxon>Ostariophysi</taxon>
        <taxon>Cypriniformes</taxon>
        <taxon>Danionidae</taxon>
        <taxon>Danioninae</taxon>
        <taxon>Danio</taxon>
    </lineage>
</organism>
<keyword id="KW-0106">Calcium</keyword>
<keyword id="KW-0217">Developmental protein</keyword>
<keyword id="KW-1015">Disulfide bond</keyword>
<keyword id="KW-0245">EGF-like domain</keyword>
<keyword id="KW-0325">Glycoprotein</keyword>
<keyword id="KW-1185">Reference proteome</keyword>
<keyword id="KW-0677">Repeat</keyword>
<keyword id="KW-0964">Secreted</keyword>
<keyword id="KW-0732">Signal</keyword>
<dbReference type="EMBL" id="AB193554">
    <property type="protein sequence ID" value="BAD91395.1"/>
    <property type="molecule type" value="mRNA"/>
</dbReference>
<dbReference type="EMBL" id="AY741664">
    <property type="protein sequence ID" value="AAW63651.1"/>
    <property type="molecule type" value="mRNA"/>
</dbReference>
<dbReference type="EMBL" id="DQ438942">
    <property type="protein sequence ID" value="ABD96046.1"/>
    <property type="molecule type" value="mRNA"/>
</dbReference>
<dbReference type="RefSeq" id="NP_001014813.1">
    <property type="nucleotide sequence ID" value="NM_001014813.1"/>
</dbReference>
<dbReference type="FunCoup" id="Q5G872">
    <property type="interactions" value="1078"/>
</dbReference>
<dbReference type="STRING" id="7955.ENSDARP00000054365"/>
<dbReference type="GlyCosmos" id="Q5G872">
    <property type="glycosylation" value="6 sites, No reported glycans"/>
</dbReference>
<dbReference type="PaxDb" id="7955-ENSDARP00000054365"/>
<dbReference type="GeneID" id="503728"/>
<dbReference type="KEGG" id="dre:503728"/>
<dbReference type="AGR" id="ZFIN:ZDB-GENE-050302-80"/>
<dbReference type="CTD" id="57758"/>
<dbReference type="ZFIN" id="ZDB-GENE-050302-80">
    <property type="gene designation" value="scube2"/>
</dbReference>
<dbReference type="eggNOG" id="KOG1217">
    <property type="taxonomic scope" value="Eukaryota"/>
</dbReference>
<dbReference type="InParanoid" id="Q5G872"/>
<dbReference type="OrthoDB" id="4062651at2759"/>
<dbReference type="PhylomeDB" id="Q5G872"/>
<dbReference type="Reactome" id="R-DRE-5362798">
    <property type="pathway name" value="Release of Hh-Np from the secreting cell"/>
</dbReference>
<dbReference type="PRO" id="PR:Q5G872"/>
<dbReference type="Proteomes" id="UP000000437">
    <property type="component" value="Chromosome 7"/>
</dbReference>
<dbReference type="GO" id="GO:0009986">
    <property type="term" value="C:cell surface"/>
    <property type="evidence" value="ECO:0000314"/>
    <property type="project" value="ZFIN"/>
</dbReference>
<dbReference type="GO" id="GO:0009897">
    <property type="term" value="C:external side of plasma membrane"/>
    <property type="evidence" value="ECO:0000250"/>
    <property type="project" value="ZFIN"/>
</dbReference>
<dbReference type="GO" id="GO:0005576">
    <property type="term" value="C:extracellular region"/>
    <property type="evidence" value="ECO:0000314"/>
    <property type="project" value="ZFIN"/>
</dbReference>
<dbReference type="GO" id="GO:0005615">
    <property type="term" value="C:extracellular space"/>
    <property type="evidence" value="ECO:0000250"/>
    <property type="project" value="ZFIN"/>
</dbReference>
<dbReference type="GO" id="GO:0030141">
    <property type="term" value="C:secretory granule"/>
    <property type="evidence" value="ECO:0000314"/>
    <property type="project" value="ZFIN"/>
</dbReference>
<dbReference type="GO" id="GO:0005509">
    <property type="term" value="F:calcium ion binding"/>
    <property type="evidence" value="ECO:0007669"/>
    <property type="project" value="InterPro"/>
</dbReference>
<dbReference type="GO" id="GO:0008015">
    <property type="term" value="P:blood circulation"/>
    <property type="evidence" value="ECO:0000315"/>
    <property type="project" value="ZFIN"/>
</dbReference>
<dbReference type="GO" id="GO:0055001">
    <property type="term" value="P:muscle cell development"/>
    <property type="evidence" value="ECO:0000316"/>
    <property type="project" value="ZFIN"/>
</dbReference>
<dbReference type="GO" id="GO:0042694">
    <property type="term" value="P:muscle cell fate specification"/>
    <property type="evidence" value="ECO:0000315"/>
    <property type="project" value="ZFIN"/>
</dbReference>
<dbReference type="GO" id="GO:0007517">
    <property type="term" value="P:muscle organ development"/>
    <property type="evidence" value="ECO:0000315"/>
    <property type="project" value="ZFIN"/>
</dbReference>
<dbReference type="GO" id="GO:0007165">
    <property type="term" value="P:signal transduction"/>
    <property type="evidence" value="ECO:0000318"/>
    <property type="project" value="GO_Central"/>
</dbReference>
<dbReference type="GO" id="GO:0007224">
    <property type="term" value="P:smoothened signaling pathway"/>
    <property type="evidence" value="ECO:0000315"/>
    <property type="project" value="ZFIN"/>
</dbReference>
<dbReference type="GO" id="GO:0001756">
    <property type="term" value="P:somitogenesis"/>
    <property type="evidence" value="ECO:0000315"/>
    <property type="project" value="ZFIN"/>
</dbReference>
<dbReference type="GO" id="GO:0002040">
    <property type="term" value="P:sprouting angiogenesis"/>
    <property type="evidence" value="ECO:0000315"/>
    <property type="project" value="ZFIN"/>
</dbReference>
<dbReference type="GO" id="GO:0051146">
    <property type="term" value="P:striated muscle cell differentiation"/>
    <property type="evidence" value="ECO:0000315"/>
    <property type="project" value="ZFIN"/>
</dbReference>
<dbReference type="CDD" id="cd00041">
    <property type="entry name" value="CUB"/>
    <property type="match status" value="1"/>
</dbReference>
<dbReference type="CDD" id="cd00054">
    <property type="entry name" value="EGF_CA"/>
    <property type="match status" value="3"/>
</dbReference>
<dbReference type="FunFam" id="2.10.50.10:FF:000024">
    <property type="entry name" value="signal peptide, CUB and EGF-like domain-containing protein 1"/>
    <property type="match status" value="1"/>
</dbReference>
<dbReference type="FunFam" id="2.10.25.10:FF:000032">
    <property type="entry name" value="signal peptide, CUB and EGF-like domain-containing protein 2 isoform X1"/>
    <property type="match status" value="1"/>
</dbReference>
<dbReference type="FunFam" id="2.10.25.10:FF:000199">
    <property type="entry name" value="signal peptide, CUB and EGF-like domain-containing protein 2 isoform X2"/>
    <property type="match status" value="1"/>
</dbReference>
<dbReference type="FunFam" id="2.10.50.10:FF:000063">
    <property type="entry name" value="signal peptide, CUB and EGF-like domain-containing protein 3 isoform X4"/>
    <property type="match status" value="1"/>
</dbReference>
<dbReference type="FunFam" id="2.10.25.10:FF:000256">
    <property type="entry name" value="Signal peptide, CUB domain and EGF like domain containing 2"/>
    <property type="match status" value="1"/>
</dbReference>
<dbReference type="FunFam" id="2.10.50.10:FF:000022">
    <property type="entry name" value="Signal peptide, CUB domain and EGF-like domain-containing 1"/>
    <property type="match status" value="1"/>
</dbReference>
<dbReference type="FunFam" id="2.10.25.10:FF:000028">
    <property type="entry name" value="Signal peptide, CUB domain and EGF-like domain-containing 2"/>
    <property type="match status" value="1"/>
</dbReference>
<dbReference type="FunFam" id="2.10.25.10:FF:000030">
    <property type="entry name" value="Signal peptide, CUB domain and EGF-like domain-containing 2"/>
    <property type="match status" value="1"/>
</dbReference>
<dbReference type="FunFam" id="2.10.25.10:FF:000035">
    <property type="entry name" value="Signal peptide, CUB domain and EGF-like domain-containing 2"/>
    <property type="match status" value="1"/>
</dbReference>
<dbReference type="FunFam" id="2.60.120.290:FF:000002">
    <property type="entry name" value="Signal peptide, CUB domain and EGF-like domain-containing 2"/>
    <property type="match status" value="1"/>
</dbReference>
<dbReference type="FunFam" id="2.10.25.10:FF:000008">
    <property type="entry name" value="Signal peptide, CUB domain, EGF-like 2"/>
    <property type="match status" value="2"/>
</dbReference>
<dbReference type="FunFam" id="2.10.25.10:FF:000240">
    <property type="entry name" value="Vitamin K-dependent protein S"/>
    <property type="match status" value="1"/>
</dbReference>
<dbReference type="Gene3D" id="2.10.25.10">
    <property type="entry name" value="Laminin"/>
    <property type="match status" value="9"/>
</dbReference>
<dbReference type="Gene3D" id="2.60.120.290">
    <property type="entry name" value="Spermadhesin, CUB domain"/>
    <property type="match status" value="1"/>
</dbReference>
<dbReference type="Gene3D" id="2.10.50.10">
    <property type="entry name" value="Tumor Necrosis Factor Receptor, subunit A, domain 2"/>
    <property type="match status" value="3"/>
</dbReference>
<dbReference type="InterPro" id="IPR026823">
    <property type="entry name" value="cEGF"/>
</dbReference>
<dbReference type="InterPro" id="IPR000859">
    <property type="entry name" value="CUB_dom"/>
</dbReference>
<dbReference type="InterPro" id="IPR001881">
    <property type="entry name" value="EGF-like_Ca-bd_dom"/>
</dbReference>
<dbReference type="InterPro" id="IPR000742">
    <property type="entry name" value="EGF-like_dom"/>
</dbReference>
<dbReference type="InterPro" id="IPR000152">
    <property type="entry name" value="EGF-type_Asp/Asn_hydroxyl_site"/>
</dbReference>
<dbReference type="InterPro" id="IPR018097">
    <property type="entry name" value="EGF_Ca-bd_CS"/>
</dbReference>
<dbReference type="InterPro" id="IPR024731">
    <property type="entry name" value="EGF_dom"/>
</dbReference>
<dbReference type="InterPro" id="IPR009030">
    <property type="entry name" value="Growth_fac_rcpt_cys_sf"/>
</dbReference>
<dbReference type="InterPro" id="IPR049883">
    <property type="entry name" value="NOTCH1_EGF-like"/>
</dbReference>
<dbReference type="InterPro" id="IPR052071">
    <property type="entry name" value="SCUB_EGF-like_domain"/>
</dbReference>
<dbReference type="InterPro" id="IPR035914">
    <property type="entry name" value="Sperma_CUB_dom_sf"/>
</dbReference>
<dbReference type="InterPro" id="IPR011641">
    <property type="entry name" value="Tyr-kin_ephrin_A/B_rcpt-like"/>
</dbReference>
<dbReference type="PANTHER" id="PTHR24046">
    <property type="entry name" value="SIGNAL PEPTIDE, CUB AND EGF-LIKE DOMAIN-CONTAINING"/>
    <property type="match status" value="1"/>
</dbReference>
<dbReference type="PANTHER" id="PTHR24046:SF3">
    <property type="entry name" value="SIGNAL PEPTIDE, CUB AND EGF-LIKE DOMAIN-CONTAINING PROTEIN 2"/>
    <property type="match status" value="1"/>
</dbReference>
<dbReference type="Pfam" id="PF12662">
    <property type="entry name" value="cEGF"/>
    <property type="match status" value="1"/>
</dbReference>
<dbReference type="Pfam" id="PF00431">
    <property type="entry name" value="CUB"/>
    <property type="match status" value="1"/>
</dbReference>
<dbReference type="Pfam" id="PF12947">
    <property type="entry name" value="EGF_3"/>
    <property type="match status" value="1"/>
</dbReference>
<dbReference type="Pfam" id="PF07645">
    <property type="entry name" value="EGF_CA"/>
    <property type="match status" value="1"/>
</dbReference>
<dbReference type="Pfam" id="PF07699">
    <property type="entry name" value="Ephrin_rec_like"/>
    <property type="match status" value="3"/>
</dbReference>
<dbReference type="Pfam" id="PF14670">
    <property type="entry name" value="FXa_inhibition"/>
    <property type="match status" value="5"/>
</dbReference>
<dbReference type="SMART" id="SM00042">
    <property type="entry name" value="CUB"/>
    <property type="match status" value="1"/>
</dbReference>
<dbReference type="SMART" id="SM00181">
    <property type="entry name" value="EGF"/>
    <property type="match status" value="10"/>
</dbReference>
<dbReference type="SMART" id="SM00179">
    <property type="entry name" value="EGF_CA"/>
    <property type="match status" value="8"/>
</dbReference>
<dbReference type="SMART" id="SM01411">
    <property type="entry name" value="Ephrin_rec_like"/>
    <property type="match status" value="3"/>
</dbReference>
<dbReference type="SUPFAM" id="SSF57196">
    <property type="entry name" value="EGF/Laminin"/>
    <property type="match status" value="1"/>
</dbReference>
<dbReference type="SUPFAM" id="SSF57184">
    <property type="entry name" value="Growth factor receptor domain"/>
    <property type="match status" value="4"/>
</dbReference>
<dbReference type="SUPFAM" id="SSF49854">
    <property type="entry name" value="Spermadhesin, CUB domain"/>
    <property type="match status" value="1"/>
</dbReference>
<dbReference type="PROSITE" id="PS00010">
    <property type="entry name" value="ASX_HYDROXYL"/>
    <property type="match status" value="6"/>
</dbReference>
<dbReference type="PROSITE" id="PS01180">
    <property type="entry name" value="CUB"/>
    <property type="match status" value="1"/>
</dbReference>
<dbReference type="PROSITE" id="PS01186">
    <property type="entry name" value="EGF_2"/>
    <property type="match status" value="8"/>
</dbReference>
<dbReference type="PROSITE" id="PS50026">
    <property type="entry name" value="EGF_3"/>
    <property type="match status" value="6"/>
</dbReference>
<dbReference type="PROSITE" id="PS01187">
    <property type="entry name" value="EGF_CA"/>
    <property type="match status" value="6"/>
</dbReference>
<name>SCUB2_DANRE</name>
<gene>
    <name type="primary">scube2</name>
    <name type="synonym">you</name>
</gene>
<sequence>MGAVWTVRLLCLFLLLLNTRQSAALPHNTDQCAEGSDACHIDAICQNTPTSYKCTCKTGFKGDGKHCEDIDECDVEYNGGCVHECNNIPGNYRCTCLDGFHLAHDGHNCLDVDECVFNNGGCQHVCVNTMGSYECRCKQGFFLSDNQHTCIHRSVEGLSCMNKEHGCGHICKESPKGGVACECRPGFELAKNQRGCILTCNHGNGGCQHICEDTEQGPICRCHVRYMLHADGRTCVERDEMAPTAPDHNATSLAEVDKRVKRRLLMETCAVNNGGCDSTCKDTSTGVRCSCPVGFTLQPDGKSCKDIDECELHNGGCDHYCRNTIGSFECSCRKGFKLLTDERSCQDIDECFFERTCDHTCVNSPGSFQCVCNKGYTLYGLAHCGDINECSFNNGGCEHTCENTMGSFGCHCRAGYKLHWNKKDCIEAEDSPLVPPPARPTLNCNKQGGGELCYLTCQSQVHISSGAEDSYTVTCGMPLPCHTGGQWNGSYCPGSGIKTIATFKSGQGKCNLKRSHENLAHSFKTALSDKRATENVQFSFVSLHCASSSRQQRSRHGRKAGEEEGSFITAQFELDVNLEEVTAEGCDLTCVRRRSEKRLRKTIRTLRKSINREQFHLHFAGSEYELAKKLVRPADTPDHCGTGQILLDKKCVKCSVGTYYDGEQGRCFLCPPGTYQDEEGQVSCDVCPGPEGRGIPETAGARNISECAGQCRPGQFSHDGFVPCLPCPQGTYQPEVGRTSCFTCGGSLTTKYDGSVSFQNCETKVQCSPGHYYNTSTHRCIRCPVGTYQMEFGQNYCIACPGNTTTDFDGSTNIMQCKNRHCGGELGEFTGYIESPNYPGNYPANIECTWTITPPPKRRILVVVPEIYLPIEDECGDYLVMRKSSLPNSVTTYETCQTYERPIAFTSRSKKLWIQFRSNEGNSGKGFQVPYVTYDEDYQELIEDIVRDGRLYASENHQEILKDKKLMRALFDVLAHPQNFFNYTAQESREMFPKSFIRFLRSKVLRFLRP</sequence>
<reference key="1">
    <citation type="journal article" date="2005" name="Curr. Biol.">
        <title>The zebrafish-secreted matrix protein You/Scube2 is implicated in long-range regulation of hedgehog signaling.</title>
        <authorList>
            <person name="Kawakami A."/>
            <person name="Nojima Y."/>
            <person name="Toyoda A."/>
            <person name="Takahoko M."/>
            <person name="Satoh M."/>
            <person name="Tanaka H."/>
            <person name="Wada H."/>
            <person name="Masai I."/>
            <person name="Terasaki H."/>
            <person name="Sakaki Y."/>
            <person name="Takeda H."/>
            <person name="Okamoto H."/>
        </authorList>
    </citation>
    <scope>NUCLEOTIDE SEQUENCE [MRNA]</scope>
    <scope>DEVELOPMENTAL STAGE</scope>
</reference>
<reference key="2">
    <citation type="journal article" date="2005" name="PLoS Biol.">
        <title>The you gene encodes an EGF-CUB protein essential for Hedgehog signaling in zebrafish.</title>
        <authorList>
            <person name="Woods I.G."/>
            <person name="Talbot W.S."/>
        </authorList>
    </citation>
    <scope>NUCLEOTIDE SEQUENCE [MRNA]</scope>
</reference>
<reference key="3">
    <citation type="journal article" date="2006" name="Dev. Biol.">
        <title>Scube2 mediates Hedgehog signalling in the zebrafish embryo.</title>
        <authorList>
            <person name="Hollway G.E."/>
            <person name="Maule J."/>
            <person name="Gautier P."/>
            <person name="Evans T.M."/>
            <person name="Keenan D.G."/>
            <person name="Lohs C."/>
            <person name="Fischer D."/>
            <person name="Wicking C."/>
            <person name="Currie P.D."/>
        </authorList>
    </citation>
    <scope>NUCLEOTIDE SEQUENCE [MRNA]</scope>
    <scope>SUBCELLULAR LOCATION</scope>
    <scope>FUNCTION</scope>
    <scope>DISRUPTION PHENOTYPE</scope>
</reference>
<proteinExistence type="evidence at transcript level"/>
<accession>Q5G872</accession>
<accession>Q1W4D3</accession>
<accession>Q59I66</accession>
<protein>
    <recommendedName>
        <fullName>Signal peptide, CUB and EGF-like domain-containing protein 2</fullName>
    </recommendedName>
    <alternativeName>
        <fullName evidence="10">Protein You</fullName>
    </alternativeName>
</protein>
<feature type="signal peptide" evidence="5">
    <location>
        <begin position="1"/>
        <end position="24"/>
    </location>
</feature>
<feature type="chain" id="PRO_0000255582" description="Signal peptide, CUB and EGF-like domain-containing protein 2">
    <location>
        <begin position="25"/>
        <end position="1010"/>
    </location>
</feature>
<feature type="domain" description="EGF-like 1; calcium-binding" evidence="7">
    <location>
        <begin position="28"/>
        <end position="68"/>
    </location>
</feature>
<feature type="domain" description="EGF-like 2; calcium-binding" evidence="7">
    <location>
        <begin position="69"/>
        <end position="110"/>
    </location>
</feature>
<feature type="domain" description="EGF-like 3; calcium-binding" evidence="7">
    <location>
        <begin position="111"/>
        <end position="147"/>
    </location>
</feature>
<feature type="domain" description="EGF-like 4" evidence="7">
    <location>
        <begin position="160"/>
        <end position="196"/>
    </location>
</feature>
<feature type="domain" description="EGF-like 5" evidence="7">
    <location>
        <begin position="200"/>
        <end position="235"/>
    </location>
</feature>
<feature type="domain" description="EGF-like 6" evidence="7">
    <location>
        <begin position="269"/>
        <end position="304"/>
    </location>
</feature>
<feature type="domain" description="EGF-like 7; calcium-binding" evidence="7">
    <location>
        <begin position="306"/>
        <end position="346"/>
    </location>
</feature>
<feature type="domain" description="EGF-like 8; calcium-binding" evidence="7">
    <location>
        <begin position="347"/>
        <end position="385"/>
    </location>
</feature>
<feature type="domain" description="EGF-like 9; calcium-binding" evidence="7">
    <location>
        <begin position="386"/>
        <end position="426"/>
    </location>
</feature>
<feature type="domain" description="CUB" evidence="6">
    <location>
        <begin position="822"/>
        <end position="934"/>
    </location>
</feature>
<feature type="region of interest" description="Interaction with the cholesterol-anchor of SHH" evidence="3">
    <location>
        <begin position="860"/>
        <end position="869"/>
    </location>
</feature>
<feature type="glycosylation site" description="N-linked (GlcNAc...) asparagine" evidence="5">
    <location>
        <position position="249"/>
    </location>
</feature>
<feature type="glycosylation site" description="N-linked (GlcNAc...) asparagine" evidence="5">
    <location>
        <position position="488"/>
    </location>
</feature>
<feature type="glycosylation site" description="N-linked (GlcNAc...) asparagine" evidence="5">
    <location>
        <position position="703"/>
    </location>
</feature>
<feature type="glycosylation site" description="N-linked (GlcNAc...) asparagine" evidence="5">
    <location>
        <position position="774"/>
    </location>
</feature>
<feature type="glycosylation site" description="N-linked (GlcNAc...) asparagine" evidence="5">
    <location>
        <position position="803"/>
    </location>
</feature>
<feature type="glycosylation site" description="N-linked (GlcNAc...) asparagine" evidence="5">
    <location>
        <position position="982"/>
    </location>
</feature>
<feature type="disulfide bond" evidence="1">
    <location>
        <begin position="32"/>
        <end position="45"/>
    </location>
</feature>
<feature type="disulfide bond" evidence="1">
    <location>
        <begin position="39"/>
        <end position="54"/>
    </location>
</feature>
<feature type="disulfide bond" evidence="1">
    <location>
        <begin position="56"/>
        <end position="67"/>
    </location>
</feature>
<feature type="disulfide bond" evidence="1">
    <location>
        <begin position="73"/>
        <end position="85"/>
    </location>
</feature>
<feature type="disulfide bond" evidence="1">
    <location>
        <begin position="81"/>
        <end position="94"/>
    </location>
</feature>
<feature type="disulfide bond" evidence="1">
    <location>
        <begin position="96"/>
        <end position="109"/>
    </location>
</feature>
<feature type="disulfide bond" evidence="1">
    <location>
        <begin position="115"/>
        <end position="126"/>
    </location>
</feature>
<feature type="disulfide bond" evidence="1">
    <location>
        <begin position="122"/>
        <end position="135"/>
    </location>
</feature>
<feature type="disulfide bond" evidence="1">
    <location>
        <begin position="310"/>
        <end position="321"/>
    </location>
</feature>
<feature type="disulfide bond" evidence="1">
    <location>
        <begin position="317"/>
        <end position="330"/>
    </location>
</feature>
<feature type="disulfide bond" evidence="1">
    <location>
        <begin position="332"/>
        <end position="345"/>
    </location>
</feature>
<feature type="disulfide bond" evidence="1">
    <location>
        <begin position="351"/>
        <end position="361"/>
    </location>
</feature>
<feature type="disulfide bond" evidence="1">
    <location>
        <begin position="357"/>
        <end position="370"/>
    </location>
</feature>
<feature type="disulfide bond" evidence="1">
    <location>
        <begin position="372"/>
        <end position="384"/>
    </location>
</feature>
<feature type="disulfide bond" evidence="1">
    <location>
        <begin position="390"/>
        <end position="401"/>
    </location>
</feature>
<feature type="disulfide bond" evidence="1">
    <location>
        <begin position="397"/>
        <end position="410"/>
    </location>
</feature>
<feature type="disulfide bond" evidence="1">
    <location>
        <begin position="412"/>
        <end position="425"/>
    </location>
</feature>
<feature type="disulfide bond" evidence="1">
    <location>
        <begin position="822"/>
        <end position="848"/>
    </location>
</feature>
<feature type="disulfide bond" evidence="1">
    <location>
        <begin position="875"/>
        <end position="896"/>
    </location>
</feature>
<feature type="sequence conflict" description="In Ref. 1; BAD91395." evidence="11" ref="1">
    <original>G</original>
    <variation>D</variation>
    <location>
        <position position="166"/>
    </location>
</feature>
<feature type="sequence conflict" description="In Ref. 3; ABD96046." evidence="11" ref="3">
    <original>C</original>
    <variation>R</variation>
    <location>
        <position position="289"/>
    </location>
</feature>
<feature type="sequence conflict" description="In Ref. 3; ABD96046." evidence="11" ref="3">
    <original>L</original>
    <variation>P</variation>
    <location>
        <position position="297"/>
    </location>
</feature>
<feature type="sequence conflict" description="In Ref. 3; ABD96046." evidence="11" ref="3">
    <original>A</original>
    <variation>T</variation>
    <location>
        <position position="414"/>
    </location>
</feature>
<feature type="sequence conflict" description="In Ref. 3; ABD96046." evidence="11" ref="3">
    <original>E</original>
    <variation>R</variation>
    <location>
        <position position="697"/>
    </location>
</feature>
<feature type="sequence conflict" description="In Ref. 1; BAD91395." evidence="11" ref="1">
    <original>G</original>
    <variation>E</variation>
    <location>
        <position position="700"/>
    </location>
</feature>
<feature type="sequence conflict" description="In Ref. 1; BAD91395." evidence="11" ref="1">
    <original>G</original>
    <variation>R</variation>
    <location>
        <position position="810"/>
    </location>
</feature>
<feature type="sequence conflict" description="In Ref. 1; BAD91395." evidence="11" ref="1">
    <original>V</original>
    <variation>A</variation>
    <location>
        <position position="932"/>
    </location>
</feature>
<evidence type="ECO:0000250" key="1"/>
<evidence type="ECO:0000250" key="2">
    <source>
        <dbReference type="UniProtKB" id="Q8IX30"/>
    </source>
</evidence>
<evidence type="ECO:0000250" key="3">
    <source>
        <dbReference type="UniProtKB" id="Q9JJS0"/>
    </source>
</evidence>
<evidence type="ECO:0000250" key="4">
    <source>
        <dbReference type="UniProtKB" id="Q9NQ36"/>
    </source>
</evidence>
<evidence type="ECO:0000255" key="5"/>
<evidence type="ECO:0000255" key="6">
    <source>
        <dbReference type="PROSITE-ProRule" id="PRU00059"/>
    </source>
</evidence>
<evidence type="ECO:0000255" key="7">
    <source>
        <dbReference type="PROSITE-ProRule" id="PRU00076"/>
    </source>
</evidence>
<evidence type="ECO:0000269" key="8">
    <source>
    </source>
</evidence>
<evidence type="ECO:0000269" key="9">
    <source>
    </source>
</evidence>
<evidence type="ECO:0000303" key="10">
    <source>
    </source>
</evidence>
<evidence type="ECO:0000305" key="11"/>
<comment type="function">
    <text evidence="4">Lipid-binding protein required for SHH long-range signaling by binding to the dually lipid-modified SHH (ShhNp) and by promoting ShhNp mobilization, solubilization and release from the cell membrane. Acts by enhancing the proteolytic processing (shedding) of the lipid-modified N- and C- terminal of ShhNp at the cell surface. Synergizes with DISP1 to cause an increase in SHH secretion. Probable cell surface coreceptor for VEGFR2 involved in VEGFR2-mediated angiogenesis.</text>
</comment>
<comment type="subunit">
    <text evidence="2 4">Interacts with SHH via the cholesterol anchor of the dually lipid-modified SHH (ShhNp) (By similarity). Interacts with PTCH1 (By similarity). Forms homooligomers and heterooligomers with SCUBE1 and SCUBE3 (By similarity). Interacts with VEGFR2 (By similarity).</text>
</comment>
<comment type="subcellular location">
    <subcellularLocation>
        <location evidence="4">Secreted</location>
    </subcellularLocation>
    <subcellularLocation>
        <location evidence="4">Cell surface</location>
    </subcellularLocation>
    <text evidence="4">Secreted and tethered at the cell surface.</text>
</comment>
<comment type="developmental stage">
    <text evidence="8">Expressed in the dorsal neural tube.</text>
</comment>
<comment type="domain">
    <text evidence="4">The CUB domain is important for the interaction with the cholesterol-anchor of SHH. The CUB domain regulates protease recruitment and activation during SHH shedding.</text>
</comment>
<comment type="PTM">
    <text evidence="4">N-glycosylated.</text>
</comment>
<comment type="disruption phenotype">
    <text evidence="9">Zebrafish 'you class' developmental mutants are grouped together based on the anormal U-shaped morphology of the somites. Homozygous zebrafish mutants show disruption of the formation of hedgehog-sensitive muscle fates, with an altered myotomal morphology from a characteristic chevron shape to a more rounded U-shaped. One of these 'you class' mutant results from disruption of the Scube2 gene. These mutants lack slow twitch muscle and muscle pionneer cells, and PTCH1 expression within the myotome and neural tube is essentially absent.</text>
</comment>